<proteinExistence type="evidence at transcript level"/>
<accession>D4GYE1</accession>
<keyword id="KW-0963">Cytoplasm</keyword>
<keyword id="KW-0418">Kinase</keyword>
<keyword id="KW-0597">Phosphoprotein</keyword>
<keyword id="KW-0598">Phosphotransferase system</keyword>
<keyword id="KW-1185">Reference proteome</keyword>
<keyword id="KW-0762">Sugar transport</keyword>
<keyword id="KW-0808">Transferase</keyword>
<keyword id="KW-0813">Transport</keyword>
<evidence type="ECO:0000250" key="1">
    <source>
        <dbReference type="UniProtKB" id="P20966"/>
    </source>
</evidence>
<evidence type="ECO:0000255" key="2">
    <source>
        <dbReference type="PROSITE-ProRule" id="PRU00422"/>
    </source>
</evidence>
<evidence type="ECO:0000256" key="3">
    <source>
        <dbReference type="SAM" id="MobiDB-lite"/>
    </source>
</evidence>
<evidence type="ECO:0000269" key="4">
    <source>
    </source>
</evidence>
<evidence type="ECO:0000303" key="5">
    <source>
    </source>
</evidence>
<evidence type="ECO:0000303" key="6">
    <source>
    </source>
</evidence>
<evidence type="ECO:0000305" key="7"/>
<dbReference type="EC" id="2.7.1.202" evidence="1"/>
<dbReference type="EMBL" id="CP001956">
    <property type="protein sequence ID" value="ADE04643.1"/>
    <property type="molecule type" value="Genomic_DNA"/>
</dbReference>
<dbReference type="RefSeq" id="WP_013035585.1">
    <property type="nucleotide sequence ID" value="NC_013967.1"/>
</dbReference>
<dbReference type="SMR" id="D4GYE1"/>
<dbReference type="STRING" id="309800.HVO_1495"/>
<dbReference type="TCDB" id="4.A.2.1.15">
    <property type="family name" value="the pts fructose-mannitol (fru) family"/>
</dbReference>
<dbReference type="PaxDb" id="309800-C498_11256"/>
<dbReference type="EnsemblBacteria" id="ADE04643">
    <property type="protein sequence ID" value="ADE04643"/>
    <property type="gene ID" value="HVO_1495"/>
</dbReference>
<dbReference type="GeneID" id="8924329"/>
<dbReference type="KEGG" id="hvo:HVO_1495"/>
<dbReference type="eggNOG" id="arCOG10194">
    <property type="taxonomic scope" value="Archaea"/>
</dbReference>
<dbReference type="HOGENOM" id="CLU_013155_2_1_2"/>
<dbReference type="OrthoDB" id="170487at2157"/>
<dbReference type="Proteomes" id="UP000008243">
    <property type="component" value="Chromosome"/>
</dbReference>
<dbReference type="GO" id="GO:0005737">
    <property type="term" value="C:cytoplasm"/>
    <property type="evidence" value="ECO:0007669"/>
    <property type="project" value="UniProtKB-SubCell"/>
</dbReference>
<dbReference type="GO" id="GO:0005886">
    <property type="term" value="C:plasma membrane"/>
    <property type="evidence" value="ECO:0007669"/>
    <property type="project" value="TreeGrafter"/>
</dbReference>
<dbReference type="GO" id="GO:0016301">
    <property type="term" value="F:kinase activity"/>
    <property type="evidence" value="ECO:0007669"/>
    <property type="project" value="UniProtKB-KW"/>
</dbReference>
<dbReference type="GO" id="GO:0022877">
    <property type="term" value="F:protein-N(PI)-phosphohistidine-fructose phosphotransferase system transporter activity"/>
    <property type="evidence" value="ECO:0007669"/>
    <property type="project" value="InterPro"/>
</dbReference>
<dbReference type="GO" id="GO:0090563">
    <property type="term" value="F:protein-phosphocysteine-sugar phosphotransferase activity"/>
    <property type="evidence" value="ECO:0007669"/>
    <property type="project" value="TreeGrafter"/>
</dbReference>
<dbReference type="GO" id="GO:0009401">
    <property type="term" value="P:phosphoenolpyruvate-dependent sugar phosphotransferase system"/>
    <property type="evidence" value="ECO:0007669"/>
    <property type="project" value="UniProtKB-KW"/>
</dbReference>
<dbReference type="CDD" id="cd05569">
    <property type="entry name" value="PTS_IIB_fructose"/>
    <property type="match status" value="1"/>
</dbReference>
<dbReference type="Gene3D" id="3.40.50.2300">
    <property type="match status" value="1"/>
</dbReference>
<dbReference type="InterPro" id="IPR050864">
    <property type="entry name" value="Bacterial_PTS_Sugar_Transport"/>
</dbReference>
<dbReference type="InterPro" id="IPR036095">
    <property type="entry name" value="PTS_EIIB-like_sf"/>
</dbReference>
<dbReference type="InterPro" id="IPR013011">
    <property type="entry name" value="PTS_EIIB_2"/>
</dbReference>
<dbReference type="InterPro" id="IPR003501">
    <property type="entry name" value="PTS_EIIB_2/3"/>
</dbReference>
<dbReference type="InterPro" id="IPR003353">
    <property type="entry name" value="PTS_IIB_fruc"/>
</dbReference>
<dbReference type="NCBIfam" id="TIGR00829">
    <property type="entry name" value="FRU"/>
    <property type="match status" value="1"/>
</dbReference>
<dbReference type="PANTHER" id="PTHR30505">
    <property type="entry name" value="FRUCTOSE-LIKE PERMEASE"/>
    <property type="match status" value="1"/>
</dbReference>
<dbReference type="PANTHER" id="PTHR30505:SF0">
    <property type="entry name" value="FRUCTOSE-LIKE PTS SYSTEM EIIBC COMPONENT-RELATED"/>
    <property type="match status" value="1"/>
</dbReference>
<dbReference type="Pfam" id="PF02302">
    <property type="entry name" value="PTS_IIB"/>
    <property type="match status" value="1"/>
</dbReference>
<dbReference type="SUPFAM" id="SSF52794">
    <property type="entry name" value="PTS system IIB component-like"/>
    <property type="match status" value="1"/>
</dbReference>
<dbReference type="PROSITE" id="PS51099">
    <property type="entry name" value="PTS_EIIB_TYPE_2"/>
    <property type="match status" value="1"/>
</dbReference>
<organism>
    <name type="scientific">Haloferax volcanii (strain ATCC 29605 / DSM 3757 / JCM 8879 / NBRC 14742 / NCIMB 2012 / VKM B-1768 / DS2)</name>
    <name type="common">Halobacterium volcanii</name>
    <dbReference type="NCBI Taxonomy" id="309800"/>
    <lineage>
        <taxon>Archaea</taxon>
        <taxon>Methanobacteriati</taxon>
        <taxon>Methanobacteriota</taxon>
        <taxon>Stenosarchaea group</taxon>
        <taxon>Halobacteria</taxon>
        <taxon>Halobacteriales</taxon>
        <taxon>Haloferacaceae</taxon>
        <taxon>Haloferax</taxon>
    </lineage>
</organism>
<protein>
    <recommendedName>
        <fullName evidence="6">PTS system fructose-specific EIIB component</fullName>
        <ecNumber evidence="1">2.7.1.202</ecNumber>
    </recommendedName>
    <alternativeName>
        <fullName evidence="6">EIIB-Fru</fullName>
    </alternativeName>
    <alternativeName>
        <fullName evidence="6">Fructose-specific phosphotransferase enzyme IIB component</fullName>
    </alternativeName>
</protein>
<reference key="1">
    <citation type="journal article" date="2010" name="PLoS ONE">
        <title>The complete genome sequence of Haloferax volcanii DS2, a model archaeon.</title>
        <authorList>
            <person name="Hartman A.L."/>
            <person name="Norais C."/>
            <person name="Badger J.H."/>
            <person name="Delmas S."/>
            <person name="Haldenby S."/>
            <person name="Madupu R."/>
            <person name="Robinson J."/>
            <person name="Khouri H."/>
            <person name="Ren Q."/>
            <person name="Lowe T.M."/>
            <person name="Maupin-Furlow J."/>
            <person name="Pohlschroder M."/>
            <person name="Daniels C."/>
            <person name="Pfeiffer F."/>
            <person name="Allers T."/>
            <person name="Eisen J.A."/>
        </authorList>
    </citation>
    <scope>NUCLEOTIDE SEQUENCE [LARGE SCALE GENOMIC DNA]</scope>
    <source>
        <strain>ATCC 29605 / DSM 3757 / JCM 8879 / NBRC 14742 / NCIMB 2012 / VKM B-1768 / DS2</strain>
    </source>
</reference>
<reference key="2">
    <citation type="journal article" date="2012" name="J. Bacteriol.">
        <title>Fructose degradation in the haloarchaeon Haloferax volcanii involves a bacterial type phosphoenolpyruvate-dependent phosphotransferase system, fructose-1-phosphate kinase, and class II fructose-1,6-bisphosphate aldolase.</title>
        <authorList>
            <person name="Pickl A."/>
            <person name="Johnsen U."/>
            <person name="Schoenheit P."/>
        </authorList>
    </citation>
    <scope>FUNCTION</scope>
    <scope>IDENTIFICATION</scope>
    <scope>INDUCTION</scope>
    <source>
        <strain>DS2 / DS70</strain>
    </source>
</reference>
<comment type="function">
    <text evidence="4">The phosphoenolpyruvate-dependent sugar phosphotransferase system (sugar PTS), a major carbohydrate active transport system, catalyzes the phosphorylation of incoming sugar substrates concomitantly with their translocation across the cell membrane. The enzyme II PtfABC PTS system is involved in fructose transport.</text>
</comment>
<comment type="catalytic activity">
    <reaction evidence="1">
        <text>D-fructose(out) + N(pros)-phospho-L-histidyl-[protein] = D-fructose 1-phosphate(in) + L-histidyl-[protein]</text>
        <dbReference type="Rhea" id="RHEA:49252"/>
        <dbReference type="Rhea" id="RHEA-COMP:9745"/>
        <dbReference type="Rhea" id="RHEA-COMP:9746"/>
        <dbReference type="ChEBI" id="CHEBI:29979"/>
        <dbReference type="ChEBI" id="CHEBI:37721"/>
        <dbReference type="ChEBI" id="CHEBI:58674"/>
        <dbReference type="ChEBI" id="CHEBI:64837"/>
        <dbReference type="EC" id="2.7.1.202"/>
    </reaction>
</comment>
<comment type="subcellular location">
    <subcellularLocation>
        <location evidence="7">Cytoplasm</location>
    </subcellularLocation>
</comment>
<comment type="induction">
    <text evidence="4">Expression is highly up-regulated in presence of fructose.</text>
</comment>
<comment type="domain">
    <text evidence="2">The PTS EIIB type-2 domain is phosphorylated by phospho-EIIA on a cysteinyl residue. Then, it transfers the phosphoryl group to the sugar substrate concomitantly with the sugar uptake processed by the PTS EIIC type-2 domain.</text>
</comment>
<comment type="miscellaneous">
    <text evidence="7">PTS-type transport systems are very rare in archaea.</text>
</comment>
<name>PTFB_HALVD</name>
<sequence>MKLVAVTSCPTGIAHSQMAAENLLQAGERLGHDIDVEVQGAMGTQDELASDAIAEADAVIITSDTSVSRDRFDGKLVLKGTVKDGVNNAEAVVQKAVELAEAGKTGSVTFGSGDDGEDADVGADDSSDDADAAESDEPVRRGGDPEKGLFARLKKLFS</sequence>
<gene>
    <name evidence="5" type="primary">ptfB</name>
    <name type="synonym">fruA1</name>
    <name type="ordered locus">HVO_1495</name>
</gene>
<feature type="chain" id="PRO_0000428983" description="PTS system fructose-specific EIIB component">
    <location>
        <begin position="1"/>
        <end position="158"/>
    </location>
</feature>
<feature type="domain" description="PTS EIIB type-2" evidence="2">
    <location>
        <begin position="1"/>
        <end position="98"/>
    </location>
</feature>
<feature type="region of interest" description="Disordered" evidence="3">
    <location>
        <begin position="104"/>
        <end position="147"/>
    </location>
</feature>
<feature type="compositionally biased region" description="Acidic residues" evidence="3">
    <location>
        <begin position="114"/>
        <end position="136"/>
    </location>
</feature>
<feature type="compositionally biased region" description="Basic and acidic residues" evidence="3">
    <location>
        <begin position="137"/>
        <end position="147"/>
    </location>
</feature>
<feature type="active site" description="Phosphocysteine intermediate" evidence="1 7">
    <location>
        <position position="9"/>
    </location>
</feature>
<feature type="modified residue" description="Phosphocysteine; by EIIA" evidence="2">
    <location>
        <position position="9"/>
    </location>
</feature>